<dbReference type="EMBL" id="X66428">
    <property type="protein sequence ID" value="CAA47056.1"/>
    <property type="molecule type" value="mRNA"/>
</dbReference>
<dbReference type="PIR" id="S35159">
    <property type="entry name" value="S35159"/>
</dbReference>
<dbReference type="SMR" id="P31093"/>
<dbReference type="ExpressionAtlas" id="P31093">
    <property type="expression patterns" value="baseline and differential"/>
</dbReference>
<dbReference type="GO" id="GO:0030093">
    <property type="term" value="C:chloroplast photosystem I"/>
    <property type="evidence" value="ECO:0007669"/>
    <property type="project" value="TreeGrafter"/>
</dbReference>
<dbReference type="GO" id="GO:0015979">
    <property type="term" value="P:photosynthesis"/>
    <property type="evidence" value="ECO:0007669"/>
    <property type="project" value="UniProtKB-KW"/>
</dbReference>
<dbReference type="FunFam" id="4.10.1190.10:FF:000001">
    <property type="entry name" value="Photosystem I reaction center subunit N"/>
    <property type="match status" value="1"/>
</dbReference>
<dbReference type="Gene3D" id="4.10.1190.10">
    <property type="entry name" value="Chlorophyll A-B binding protein"/>
    <property type="match status" value="1"/>
</dbReference>
<dbReference type="InterPro" id="IPR008796">
    <property type="entry name" value="PSAN"/>
</dbReference>
<dbReference type="InterPro" id="IPR044907">
    <property type="entry name" value="PSAN_sf"/>
</dbReference>
<dbReference type="PANTHER" id="PTHR36814">
    <property type="entry name" value="PHOTOSYSTEM I REACTION CENTER SUBUNIT N, CHLOROPLASTIC"/>
    <property type="match status" value="1"/>
</dbReference>
<dbReference type="PANTHER" id="PTHR36814:SF1">
    <property type="entry name" value="PHOTOSYSTEM I REACTION CENTER SUBUNIT N, CHLOROPLASTIC"/>
    <property type="match status" value="1"/>
</dbReference>
<dbReference type="Pfam" id="PF05479">
    <property type="entry name" value="PsaN"/>
    <property type="match status" value="1"/>
</dbReference>
<proteinExistence type="evidence at transcript level"/>
<keyword id="KW-0150">Chloroplast</keyword>
<keyword id="KW-0472">Membrane</keyword>
<keyword id="KW-0602">Photosynthesis</keyword>
<keyword id="KW-0603">Photosystem I</keyword>
<keyword id="KW-0934">Plastid</keyword>
<keyword id="KW-0793">Thylakoid</keyword>
<keyword id="KW-0809">Transit peptide</keyword>
<feature type="transit peptide" description="Chloroplast" evidence="1">
    <location>
        <begin position="1"/>
        <end position="60"/>
    </location>
</feature>
<feature type="chain" id="PRO_0000029357" description="Photosystem I reaction center subunit N, chloroplastic">
    <location>
        <begin position="61"/>
        <end position="145"/>
    </location>
</feature>
<sequence>MAGVNTSVVGLKPAAAVPQSASPAAAKRVQVAPAKDRRSALLGLAAVFAATAASAGSARASVFDEYLEKSKLNKELNDKKRAATSGANFARAYTVQFGSCKFPYNFTGCQDLAKQKKVPFITDDLEIECEGKEKFKCGSNVFWKW</sequence>
<protein>
    <recommendedName>
        <fullName>Photosystem I reaction center subunit N, chloroplastic</fullName>
        <shortName>PSI-N</shortName>
    </recommendedName>
</protein>
<evidence type="ECO:0000250" key="1"/>
<evidence type="ECO:0000305" key="2"/>
<name>PSAN_HORVU</name>
<reference key="1">
    <citation type="journal article" date="1993" name="Plant Mol. Biol.">
        <title>The primary structure of a cDNA for PsaN, encoding an extrinsic lumenal polypeptide of barley photosystem I.</title>
        <authorList>
            <person name="Knoetzel J."/>
            <person name="Simpson D.J."/>
        </authorList>
    </citation>
    <scope>NUCLEOTIDE SEQUENCE [MRNA]</scope>
    <source>
        <strain>cv. Svalofs Bonus</strain>
        <tissue>Leaf</tissue>
    </source>
</reference>
<gene>
    <name type="primary">PSAN</name>
</gene>
<accession>P31093</accession>
<organism>
    <name type="scientific">Hordeum vulgare</name>
    <name type="common">Barley</name>
    <dbReference type="NCBI Taxonomy" id="4513"/>
    <lineage>
        <taxon>Eukaryota</taxon>
        <taxon>Viridiplantae</taxon>
        <taxon>Streptophyta</taxon>
        <taxon>Embryophyta</taxon>
        <taxon>Tracheophyta</taxon>
        <taxon>Spermatophyta</taxon>
        <taxon>Magnoliopsida</taxon>
        <taxon>Liliopsida</taxon>
        <taxon>Poales</taxon>
        <taxon>Poaceae</taxon>
        <taxon>BOP clade</taxon>
        <taxon>Pooideae</taxon>
        <taxon>Triticodae</taxon>
        <taxon>Triticeae</taxon>
        <taxon>Hordeinae</taxon>
        <taxon>Hordeum</taxon>
    </lineage>
</organism>
<comment type="function">
    <text>May function in mediating the binding of the antenna complexes to the PSI reaction center and core antenna.</text>
</comment>
<comment type="subcellular location">
    <subcellularLocation>
        <location>Plastid</location>
        <location>Chloroplast thylakoid membrane</location>
        <topology>Peripheral membrane protein</topology>
        <orientation>Lumenal side</orientation>
    </subcellularLocation>
</comment>
<comment type="similarity">
    <text evidence="2">Belongs to the psaN family.</text>
</comment>